<sequence length="147" mass="16000">MSHRVSILSSHFSPASAVMASEKEAALAATPSDSPTIFDKIISKEIPSTVVFEDDKVLAFRDITPQGPVHILLIPKVRDGLTGLSKAEERHIDILGRLLYTAKLVAKQEGLAEGFRIVINDGPQGCQSVYHIHVHLIGGRQMNWPPG</sequence>
<proteinExistence type="evidence at protein level"/>
<dbReference type="EC" id="3.6.2.1" evidence="4"/>
<dbReference type="EMBL" id="AL163972">
    <property type="protein sequence ID" value="CAB88052.1"/>
    <property type="status" value="ALT_INIT"/>
    <property type="molecule type" value="Genomic_DNA"/>
</dbReference>
<dbReference type="EMBL" id="CP002686">
    <property type="protein sequence ID" value="AEE79527.1"/>
    <property type="molecule type" value="Genomic_DNA"/>
</dbReference>
<dbReference type="EMBL" id="AY045861">
    <property type="protein sequence ID" value="AAK76535.1"/>
    <property type="molecule type" value="mRNA"/>
</dbReference>
<dbReference type="EMBL" id="BT002356">
    <property type="protein sequence ID" value="AAN86189.1"/>
    <property type="molecule type" value="mRNA"/>
</dbReference>
<dbReference type="EMBL" id="AY086874">
    <property type="protein sequence ID" value="AAM63920.1"/>
    <property type="status" value="ALT_INIT"/>
    <property type="molecule type" value="mRNA"/>
</dbReference>
<dbReference type="PIR" id="T49050">
    <property type="entry name" value="T49050"/>
</dbReference>
<dbReference type="RefSeq" id="NP_567038.1">
    <property type="nucleotide sequence ID" value="NM_115507.4"/>
</dbReference>
<dbReference type="SMR" id="Q8GUN2"/>
<dbReference type="FunCoup" id="Q8GUN2">
    <property type="interactions" value="2593"/>
</dbReference>
<dbReference type="IntAct" id="Q8GUN2">
    <property type="interactions" value="1"/>
</dbReference>
<dbReference type="STRING" id="3702.Q8GUN2"/>
<dbReference type="GlyGen" id="Q8GUN2">
    <property type="glycosylation" value="1 site"/>
</dbReference>
<dbReference type="iPTMnet" id="Q8GUN2"/>
<dbReference type="PaxDb" id="3702-AT3G56490.1"/>
<dbReference type="ProMEX" id="Q8GUN2"/>
<dbReference type="ProteomicsDB" id="230188"/>
<dbReference type="EnsemblPlants" id="AT3G56490.1">
    <property type="protein sequence ID" value="AT3G56490.1"/>
    <property type="gene ID" value="AT3G56490"/>
</dbReference>
<dbReference type="GeneID" id="824816"/>
<dbReference type="Gramene" id="AT3G56490.1">
    <property type="protein sequence ID" value="AT3G56490.1"/>
    <property type="gene ID" value="AT3G56490"/>
</dbReference>
<dbReference type="KEGG" id="ath:AT3G56490"/>
<dbReference type="Araport" id="AT3G56490"/>
<dbReference type="TAIR" id="AT3G56490">
    <property type="gene designation" value="HIT3"/>
</dbReference>
<dbReference type="eggNOG" id="KOG3275">
    <property type="taxonomic scope" value="Eukaryota"/>
</dbReference>
<dbReference type="HOGENOM" id="CLU_056776_8_0_1"/>
<dbReference type="InParanoid" id="Q8GUN2"/>
<dbReference type="OMA" id="YRVVMNC"/>
<dbReference type="OrthoDB" id="672793at2759"/>
<dbReference type="PhylomeDB" id="Q8GUN2"/>
<dbReference type="BioCyc" id="ARA:AT3G56490-MONOMER"/>
<dbReference type="PRO" id="PR:Q8GUN2"/>
<dbReference type="Proteomes" id="UP000006548">
    <property type="component" value="Chromosome 3"/>
</dbReference>
<dbReference type="ExpressionAtlas" id="Q8GUN2">
    <property type="expression patterns" value="baseline and differential"/>
</dbReference>
<dbReference type="GO" id="GO:0009507">
    <property type="term" value="C:chloroplast"/>
    <property type="evidence" value="ECO:0007669"/>
    <property type="project" value="UniProtKB-SubCell"/>
</dbReference>
<dbReference type="GO" id="GO:0005829">
    <property type="term" value="C:cytosol"/>
    <property type="evidence" value="ECO:0007005"/>
    <property type="project" value="TAIR"/>
</dbReference>
<dbReference type="GO" id="GO:0005777">
    <property type="term" value="C:peroxisome"/>
    <property type="evidence" value="ECO:0000314"/>
    <property type="project" value="TAIR"/>
</dbReference>
<dbReference type="GO" id="GO:0005886">
    <property type="term" value="C:plasma membrane"/>
    <property type="evidence" value="ECO:0007005"/>
    <property type="project" value="TAIR"/>
</dbReference>
<dbReference type="GO" id="GO:0099503">
    <property type="term" value="C:secretory vesicle"/>
    <property type="evidence" value="ECO:0007005"/>
    <property type="project" value="TAIR"/>
</dbReference>
<dbReference type="GO" id="GO:0047627">
    <property type="term" value="F:adenylylsulfatase activity"/>
    <property type="evidence" value="ECO:0000314"/>
    <property type="project" value="TAIR"/>
</dbReference>
<dbReference type="GO" id="GO:0000166">
    <property type="term" value="F:nucleotide binding"/>
    <property type="evidence" value="ECO:0007669"/>
    <property type="project" value="UniProtKB-KW"/>
</dbReference>
<dbReference type="GO" id="GO:0009150">
    <property type="term" value="P:purine ribonucleotide metabolic process"/>
    <property type="evidence" value="ECO:0000314"/>
    <property type="project" value="TAIR"/>
</dbReference>
<dbReference type="GO" id="GO:0006790">
    <property type="term" value="P:sulfur compound metabolic process"/>
    <property type="evidence" value="ECO:0000314"/>
    <property type="project" value="TAIR"/>
</dbReference>
<dbReference type="CDD" id="cd01276">
    <property type="entry name" value="PKCI_related"/>
    <property type="match status" value="1"/>
</dbReference>
<dbReference type="FunFam" id="3.30.428.10:FF:000005">
    <property type="entry name" value="Histidine triad nucleotide-binding protein 1"/>
    <property type="match status" value="1"/>
</dbReference>
<dbReference type="Gene3D" id="3.30.428.10">
    <property type="entry name" value="HIT-like"/>
    <property type="match status" value="1"/>
</dbReference>
<dbReference type="InterPro" id="IPR019808">
    <property type="entry name" value="Histidine_triad_CS"/>
</dbReference>
<dbReference type="InterPro" id="IPR001310">
    <property type="entry name" value="Histidine_triad_HIT"/>
</dbReference>
<dbReference type="InterPro" id="IPR011146">
    <property type="entry name" value="HIT-like"/>
</dbReference>
<dbReference type="InterPro" id="IPR036265">
    <property type="entry name" value="HIT-like_sf"/>
</dbReference>
<dbReference type="PANTHER" id="PTHR23089">
    <property type="entry name" value="HISTIDINE TRIAD HIT PROTEIN"/>
    <property type="match status" value="1"/>
</dbReference>
<dbReference type="Pfam" id="PF01230">
    <property type="entry name" value="HIT"/>
    <property type="match status" value="1"/>
</dbReference>
<dbReference type="PRINTS" id="PR00332">
    <property type="entry name" value="HISTRIAD"/>
</dbReference>
<dbReference type="SUPFAM" id="SSF54197">
    <property type="entry name" value="HIT-like"/>
    <property type="match status" value="1"/>
</dbReference>
<dbReference type="PROSITE" id="PS00892">
    <property type="entry name" value="HIT_1"/>
    <property type="match status" value="1"/>
</dbReference>
<dbReference type="PROSITE" id="PS51084">
    <property type="entry name" value="HIT_2"/>
    <property type="match status" value="1"/>
</dbReference>
<keyword id="KW-0150">Chloroplast</keyword>
<keyword id="KW-0378">Hydrolase</keyword>
<keyword id="KW-0547">Nucleotide-binding</keyword>
<keyword id="KW-0576">Peroxisome</keyword>
<keyword id="KW-0934">Plastid</keyword>
<keyword id="KW-1185">Reference proteome</keyword>
<accession>Q8GUN2</accession>
<accession>Q9LXZ1</accession>
<feature type="chain" id="PRO_0000436746" description="Adenylylsulfatase HINT1">
    <location>
        <begin position="1"/>
        <end position="147"/>
    </location>
</feature>
<feature type="domain" description="HIT" evidence="2">
    <location>
        <begin position="37"/>
        <end position="147"/>
    </location>
</feature>
<feature type="short sequence motif" description="Histidine triad motif" evidence="2">
    <location>
        <begin position="131"/>
        <end position="135"/>
    </location>
</feature>
<feature type="active site" description="Tele-AMP-histidine intermediate" evidence="1">
    <location>
        <position position="133"/>
    </location>
</feature>
<feature type="binding site" evidence="1">
    <location>
        <position position="135"/>
    </location>
    <ligand>
        <name>substrate</name>
    </ligand>
</feature>
<organism>
    <name type="scientific">Arabidopsis thaliana</name>
    <name type="common">Mouse-ear cress</name>
    <dbReference type="NCBI Taxonomy" id="3702"/>
    <lineage>
        <taxon>Eukaryota</taxon>
        <taxon>Viridiplantae</taxon>
        <taxon>Streptophyta</taxon>
        <taxon>Embryophyta</taxon>
        <taxon>Tracheophyta</taxon>
        <taxon>Spermatophyta</taxon>
        <taxon>Magnoliopsida</taxon>
        <taxon>eudicotyledons</taxon>
        <taxon>Gunneridae</taxon>
        <taxon>Pentapetalae</taxon>
        <taxon>rosids</taxon>
        <taxon>malvids</taxon>
        <taxon>Brassicales</taxon>
        <taxon>Brassicaceae</taxon>
        <taxon>Camelineae</taxon>
        <taxon>Arabidopsis</taxon>
    </lineage>
</organism>
<evidence type="ECO:0000250" key="1">
    <source>
        <dbReference type="UniProtKB" id="P49789"/>
    </source>
</evidence>
<evidence type="ECO:0000255" key="2">
    <source>
        <dbReference type="PROSITE-ProRule" id="PRU00464"/>
    </source>
</evidence>
<evidence type="ECO:0000269" key="3">
    <source>
    </source>
</evidence>
<evidence type="ECO:0000269" key="4">
    <source>
    </source>
</evidence>
<evidence type="ECO:0000303" key="5">
    <source>
    </source>
</evidence>
<evidence type="ECO:0000305" key="6"/>
<evidence type="ECO:0000312" key="7">
    <source>
        <dbReference type="Araport" id="AT3G56490"/>
    </source>
</evidence>
<evidence type="ECO:0000312" key="8">
    <source>
        <dbReference type="EMBL" id="CAB88052.1"/>
    </source>
</evidence>
<name>HINT1_ARATH</name>
<gene>
    <name evidence="5" type="primary">HINT1</name>
    <name evidence="6" type="synonym">HIT3</name>
    <name evidence="7" type="ordered locus">At3g56490</name>
    <name evidence="8" type="ORF">5P19_140</name>
</gene>
<comment type="function">
    <text evidence="4">Possesses adenylylsulfatase activity in vitro.</text>
</comment>
<comment type="catalytic activity">
    <reaction evidence="4">
        <text>adenosine 5'-phosphosulfate + H2O = sulfate + AMP + 2 H(+)</text>
        <dbReference type="Rhea" id="RHEA:17041"/>
        <dbReference type="ChEBI" id="CHEBI:15377"/>
        <dbReference type="ChEBI" id="CHEBI:15378"/>
        <dbReference type="ChEBI" id="CHEBI:16189"/>
        <dbReference type="ChEBI" id="CHEBI:58243"/>
        <dbReference type="ChEBI" id="CHEBI:456215"/>
        <dbReference type="EC" id="3.6.2.1"/>
    </reaction>
</comment>
<comment type="subcellular location">
    <subcellularLocation>
        <location evidence="3">Peroxisome</location>
    </subcellularLocation>
    <subcellularLocation>
        <location evidence="3">Plastid</location>
        <location evidence="3">Chloroplast</location>
    </subcellularLocation>
</comment>
<comment type="sequence caution" evidence="6">
    <conflict type="erroneous initiation">
        <sequence resource="EMBL-CDS" id="AAM63920"/>
    </conflict>
    <text>Truncated N-terminus.</text>
</comment>
<comment type="sequence caution" evidence="6">
    <conflict type="erroneous initiation">
        <sequence resource="EMBL-CDS" id="CAB88052"/>
    </conflict>
    <text>Truncated N-terminus.</text>
</comment>
<reference key="1">
    <citation type="journal article" date="2000" name="Nature">
        <title>Sequence and analysis of chromosome 3 of the plant Arabidopsis thaliana.</title>
        <authorList>
            <person name="Salanoubat M."/>
            <person name="Lemcke K."/>
            <person name="Rieger M."/>
            <person name="Ansorge W."/>
            <person name="Unseld M."/>
            <person name="Fartmann B."/>
            <person name="Valle G."/>
            <person name="Bloecker H."/>
            <person name="Perez-Alonso M."/>
            <person name="Obermaier B."/>
            <person name="Delseny M."/>
            <person name="Boutry M."/>
            <person name="Grivell L.A."/>
            <person name="Mache R."/>
            <person name="Puigdomenech P."/>
            <person name="De Simone V."/>
            <person name="Choisne N."/>
            <person name="Artiguenave F."/>
            <person name="Robert C."/>
            <person name="Brottier P."/>
            <person name="Wincker P."/>
            <person name="Cattolico L."/>
            <person name="Weissenbach J."/>
            <person name="Saurin W."/>
            <person name="Quetier F."/>
            <person name="Schaefer M."/>
            <person name="Mueller-Auer S."/>
            <person name="Gabel C."/>
            <person name="Fuchs M."/>
            <person name="Benes V."/>
            <person name="Wurmbach E."/>
            <person name="Drzonek H."/>
            <person name="Erfle H."/>
            <person name="Jordan N."/>
            <person name="Bangert S."/>
            <person name="Wiedelmann R."/>
            <person name="Kranz H."/>
            <person name="Voss H."/>
            <person name="Holland R."/>
            <person name="Brandt P."/>
            <person name="Nyakatura G."/>
            <person name="Vezzi A."/>
            <person name="D'Angelo M."/>
            <person name="Pallavicini A."/>
            <person name="Toppo S."/>
            <person name="Simionati B."/>
            <person name="Conrad A."/>
            <person name="Hornischer K."/>
            <person name="Kauer G."/>
            <person name="Loehnert T.-H."/>
            <person name="Nordsiek G."/>
            <person name="Reichelt J."/>
            <person name="Scharfe M."/>
            <person name="Schoen O."/>
            <person name="Bargues M."/>
            <person name="Terol J."/>
            <person name="Climent J."/>
            <person name="Navarro P."/>
            <person name="Collado C."/>
            <person name="Perez-Perez A."/>
            <person name="Ottenwaelder B."/>
            <person name="Duchemin D."/>
            <person name="Cooke R."/>
            <person name="Laudie M."/>
            <person name="Berger-Llauro C."/>
            <person name="Purnelle B."/>
            <person name="Masuy D."/>
            <person name="de Haan M."/>
            <person name="Maarse A.C."/>
            <person name="Alcaraz J.-P."/>
            <person name="Cottet A."/>
            <person name="Casacuberta E."/>
            <person name="Monfort A."/>
            <person name="Argiriou A."/>
            <person name="Flores M."/>
            <person name="Liguori R."/>
            <person name="Vitale D."/>
            <person name="Mannhaupt G."/>
            <person name="Haase D."/>
            <person name="Schoof H."/>
            <person name="Rudd S."/>
            <person name="Zaccaria P."/>
            <person name="Mewes H.-W."/>
            <person name="Mayer K.F.X."/>
            <person name="Kaul S."/>
            <person name="Town C.D."/>
            <person name="Koo H.L."/>
            <person name="Tallon L.J."/>
            <person name="Jenkins J."/>
            <person name="Rooney T."/>
            <person name="Rizzo M."/>
            <person name="Walts A."/>
            <person name="Utterback T."/>
            <person name="Fujii C.Y."/>
            <person name="Shea T.P."/>
            <person name="Creasy T.H."/>
            <person name="Haas B."/>
            <person name="Maiti R."/>
            <person name="Wu D."/>
            <person name="Peterson J."/>
            <person name="Van Aken S."/>
            <person name="Pai G."/>
            <person name="Militscher J."/>
            <person name="Sellers P."/>
            <person name="Gill J.E."/>
            <person name="Feldblyum T.V."/>
            <person name="Preuss D."/>
            <person name="Lin X."/>
            <person name="Nierman W.C."/>
            <person name="Salzberg S.L."/>
            <person name="White O."/>
            <person name="Venter J.C."/>
            <person name="Fraser C.M."/>
            <person name="Kaneko T."/>
            <person name="Nakamura Y."/>
            <person name="Sato S."/>
            <person name="Kato T."/>
            <person name="Asamizu E."/>
            <person name="Sasamoto S."/>
            <person name="Kimura T."/>
            <person name="Idesawa K."/>
            <person name="Kawashima K."/>
            <person name="Kishida Y."/>
            <person name="Kiyokawa C."/>
            <person name="Kohara M."/>
            <person name="Matsumoto M."/>
            <person name="Matsuno A."/>
            <person name="Muraki A."/>
            <person name="Nakayama S."/>
            <person name="Nakazaki N."/>
            <person name="Shinpo S."/>
            <person name="Takeuchi C."/>
            <person name="Wada T."/>
            <person name="Watanabe A."/>
            <person name="Yamada M."/>
            <person name="Yasuda M."/>
            <person name="Tabata S."/>
        </authorList>
    </citation>
    <scope>NUCLEOTIDE SEQUENCE [LARGE SCALE GENOMIC DNA]</scope>
    <source>
        <strain>cv. Columbia</strain>
    </source>
</reference>
<reference key="2">
    <citation type="journal article" date="2017" name="Plant J.">
        <title>Araport11: a complete reannotation of the Arabidopsis thaliana reference genome.</title>
        <authorList>
            <person name="Cheng C.Y."/>
            <person name="Krishnakumar V."/>
            <person name="Chan A.P."/>
            <person name="Thibaud-Nissen F."/>
            <person name="Schobel S."/>
            <person name="Town C.D."/>
        </authorList>
    </citation>
    <scope>GENOME REANNOTATION</scope>
    <source>
        <strain>cv. Columbia</strain>
    </source>
</reference>
<reference key="3">
    <citation type="journal article" date="2003" name="Science">
        <title>Empirical analysis of transcriptional activity in the Arabidopsis genome.</title>
        <authorList>
            <person name="Yamada K."/>
            <person name="Lim J."/>
            <person name="Dale J.M."/>
            <person name="Chen H."/>
            <person name="Shinn P."/>
            <person name="Palm C.J."/>
            <person name="Southwick A.M."/>
            <person name="Wu H.C."/>
            <person name="Kim C.J."/>
            <person name="Nguyen M."/>
            <person name="Pham P.K."/>
            <person name="Cheuk R.F."/>
            <person name="Karlin-Newmann G."/>
            <person name="Liu S.X."/>
            <person name="Lam B."/>
            <person name="Sakano H."/>
            <person name="Wu T."/>
            <person name="Yu G."/>
            <person name="Miranda M."/>
            <person name="Quach H.L."/>
            <person name="Tripp M."/>
            <person name="Chang C.H."/>
            <person name="Lee J.M."/>
            <person name="Toriumi M.J."/>
            <person name="Chan M.M."/>
            <person name="Tang C.C."/>
            <person name="Onodera C.S."/>
            <person name="Deng J.M."/>
            <person name="Akiyama K."/>
            <person name="Ansari Y."/>
            <person name="Arakawa T."/>
            <person name="Banh J."/>
            <person name="Banno F."/>
            <person name="Bowser L."/>
            <person name="Brooks S.Y."/>
            <person name="Carninci P."/>
            <person name="Chao Q."/>
            <person name="Choy N."/>
            <person name="Enju A."/>
            <person name="Goldsmith A.D."/>
            <person name="Gurjal M."/>
            <person name="Hansen N.F."/>
            <person name="Hayashizaki Y."/>
            <person name="Johnson-Hopson C."/>
            <person name="Hsuan V.W."/>
            <person name="Iida K."/>
            <person name="Karnes M."/>
            <person name="Khan S."/>
            <person name="Koesema E."/>
            <person name="Ishida J."/>
            <person name="Jiang P.X."/>
            <person name="Jones T."/>
            <person name="Kawai J."/>
            <person name="Kamiya A."/>
            <person name="Meyers C."/>
            <person name="Nakajima M."/>
            <person name="Narusaka M."/>
            <person name="Seki M."/>
            <person name="Sakurai T."/>
            <person name="Satou M."/>
            <person name="Tamse R."/>
            <person name="Vaysberg M."/>
            <person name="Wallender E.K."/>
            <person name="Wong C."/>
            <person name="Yamamura Y."/>
            <person name="Yuan S."/>
            <person name="Shinozaki K."/>
            <person name="Davis R.W."/>
            <person name="Theologis A."/>
            <person name="Ecker J.R."/>
        </authorList>
    </citation>
    <scope>NUCLEOTIDE SEQUENCE [LARGE SCALE MRNA]</scope>
    <source>
        <strain>cv. Columbia</strain>
    </source>
</reference>
<reference key="4">
    <citation type="submission" date="2002-03" db="EMBL/GenBank/DDBJ databases">
        <title>Full-length cDNA from Arabidopsis thaliana.</title>
        <authorList>
            <person name="Brover V.V."/>
            <person name="Troukhan M.E."/>
            <person name="Alexandrov N.A."/>
            <person name="Lu Y.-P."/>
            <person name="Flavell R.B."/>
            <person name="Feldmann K.A."/>
        </authorList>
    </citation>
    <scope>NUCLEOTIDE SEQUENCE [LARGE SCALE MRNA]</scope>
</reference>
<reference key="5">
    <citation type="journal article" date="2009" name="Plant Physiol.">
        <title>In-depth proteome analysis of Arabidopsis leaf peroxisomes combined with in vivo subcellular targeting verification indicates novel metabolic and regulatory functions of peroxisomes.</title>
        <authorList>
            <person name="Reumann S."/>
            <person name="Quan S."/>
            <person name="Aung K."/>
            <person name="Yang P."/>
            <person name="Manandhar-Shrestha K."/>
            <person name="Holbrook D."/>
            <person name="Linka N."/>
            <person name="Switzenberg R."/>
            <person name="Wilkerson C.G."/>
            <person name="Weber A.P."/>
            <person name="Olsen L.J."/>
            <person name="Hu J."/>
        </authorList>
    </citation>
    <scope>SUBCELLULAR LOCATION</scope>
</reference>
<reference key="6">
    <citation type="journal article" date="2009" name="Plant Physiol.">
        <title>Large-scale Arabidopsis phosphoproteome profiling reveals novel chloroplast kinase substrates and phosphorylation networks.</title>
        <authorList>
            <person name="Reiland S."/>
            <person name="Messerli G."/>
            <person name="Baerenfaller K."/>
            <person name="Gerrits B."/>
            <person name="Endler A."/>
            <person name="Grossmann J."/>
            <person name="Gruissem W."/>
            <person name="Baginsky S."/>
        </authorList>
    </citation>
    <scope>IDENTIFICATION BY MASS SPECTROMETRY [LARGE SCALE ANALYSIS]</scope>
</reference>
<reference key="7">
    <citation type="journal article" date="2010" name="FEBS Lett.">
        <title>Dual activity of certain HIT-proteins: A. thaliana Hint4 and C. elegans DcpS act on adenosine 5'-phosphosulfate as hydrolases (forming AMP) and as phosphorylases (forming ADP).</title>
        <authorList>
            <person name="Guranowski A."/>
            <person name="Wojdyla A.M."/>
            <person name="Zimny J."/>
            <person name="Wypijewska A."/>
            <person name="Kowalska J."/>
            <person name="Jemielity J."/>
            <person name="Davis R.E."/>
            <person name="Bieganowski P."/>
        </authorList>
    </citation>
    <scope>FUNCTION</scope>
    <scope>CATALYTIC ACTIVITY</scope>
</reference>
<protein>
    <recommendedName>
        <fullName evidence="6">Adenylylsulfatase HINT1</fullName>
        <ecNumber evidence="4">3.6.2.1</ecNumber>
    </recommendedName>
    <alternativeName>
        <fullName evidence="6">HIS triad family protein 3</fullName>
    </alternativeName>
    <alternativeName>
        <fullName evidence="6">Histidine triad nucleotide-binding protein 1</fullName>
    </alternativeName>
</protein>